<organism>
    <name type="scientific">Gallus gallus</name>
    <name type="common">Chicken</name>
    <dbReference type="NCBI Taxonomy" id="9031"/>
    <lineage>
        <taxon>Eukaryota</taxon>
        <taxon>Metazoa</taxon>
        <taxon>Chordata</taxon>
        <taxon>Craniata</taxon>
        <taxon>Vertebrata</taxon>
        <taxon>Euteleostomi</taxon>
        <taxon>Archelosauria</taxon>
        <taxon>Archosauria</taxon>
        <taxon>Dinosauria</taxon>
        <taxon>Saurischia</taxon>
        <taxon>Theropoda</taxon>
        <taxon>Coelurosauria</taxon>
        <taxon>Aves</taxon>
        <taxon>Neognathae</taxon>
        <taxon>Galloanserae</taxon>
        <taxon>Galliformes</taxon>
        <taxon>Phasianidae</taxon>
        <taxon>Phasianinae</taxon>
        <taxon>Gallus</taxon>
    </lineage>
</organism>
<gene>
    <name type="primary">MUC5B</name>
</gene>
<sequence>MEIKKERSFWIFCLIWSFCKGKEPVQIVQVSTVGRSECTTWGNFHFHTFDHVKFTFPGTCTYVFASHCNDSYQDFNIKIRRSDKNSHLIYFTVTTDGVILEVKETGITVNGNQIPLPFSLKSILIEDTCAYFQVTSKLGLTLKWNWADTLLLDLEETYKEKICGLCGNYDGNKKNDLILDGYKMHPRQFGNFHKVEDPSEKCPDVRPDDHTGRHPTEDDNRCSKYKKMCKKLLSRFGNCPKVVAFDDYVATCTEDMCNCVVNSSQSDLVSSCICSTLNQYSRDCVLSKGDPGEWRTKELCYQECPSNMEYMECGNSCADTCADPERSKICKAPCTDGCFCPPGTILDDLGGKKCVPRDSCPCMFQGKVYSSGGTYSTPCQNCTCKGGHWSCISLPCSGSCSIDGGFHIKTFDNKKFNFHGNCHYVLAKNTDDTFVVIGEIIQCGTSKTMTCLKNVLVTLGRTTIKICSCGSIYMNNFIVKLPVSKDGITIFRPSTFFIKILSSAGVQIRVQMKPVMQLSITVDHSYQNRTSGLCGNFNNIQTDDFRTATGAVEDSAAAFGNSWKTRASCFDVEDSFEDPCSNSVDKEKFAQHWCALLSNTSSTFAACHSVVDPSVYIKRCMYDTCNAEKSEVALCSVLSTYSRDCAAAGMTLKGWRQGICDPSEECPETMVYNYSVKYCNQSCRSLDEPDPLCKVQIAPMEGCGCPEGTYLNDEEECVTPDDCPCYYKGKIVQPGNSFQEDKLLCKCIQGRLDCIGETVLVKDCPAPMYYFNCSSAGPGAIGSECQKSCKTQDMHCYVTECVSGCMCPDGLVLDGSGGCIPKDQCPCVHGGHFYKPGETIRVDCNTCTCNKRQWNCTDNPCKGTCTVYGNGHYMSFDGEKFDFLGDCDYILAQDFCPNNMDAGTFRIVIQNNACGKSLSICSLKITLIFESSEIRLLEGRIQEIATDPGAEKNYKVDLRGGYIVIETTQGMSFMWDQKTTVVVHVTPSFQGKVCGLCGDFDGRSRNDFTTRGQSVEMSIQEFGNSWKITSTCSNINMTDLCADQPFKSALGQKHCSIIKSSVFEACHSKVNPIPYYESCVSDFCGCDSVGDCECFCTSVAAYARSCSTAGVCINWRTPAICPVFCDYYNPPDKHEWFYKPCGAPCLKTCRNPQGKCGNILYSLEGCYPECSPDKPYFDEERRECVSLPDCTSCNPEEKLCTEDSKDCLCCYNGKTYPLNETIYSQTEGTKCGNAFCGPNGMIIETFIPCSTLSVPAQEQLMQPVTSAPLLSTEATPCFCTDNGQLIQMGENVSLPMNISGHCAYSICNASCQIELIWAECKVVQTEALETCEPNSEACPPTAAPNATSLVPATALAPMSDCLGLIPPRKFNESWDFGNCQIATCLGEENNIKLSSITCPPQQLKLCVNGFPFMKHHDETGCCEVFECQCICSGWGNEHYVTFDGTYYHFKENCTYVLVELIQPSSEKFWIHIDNYYCGAADGAICSMSLLIFHSNSLVILTQAKEHGKGTNLVLFNDKKVVPDISKNGIRITSSGLYIIVEIPELEVYVSYSRLAFYIKLPFGKYYNNTMGLCGTCTNQKSDDARKRNGEVTDSFKEMALDWKAPVSTNRYCNPGISEPVKIENYQHCEPSELCKIIWNLTECHRVVPPQPYYEACVASRCSQQHPSTECQSMQTYAALCGLHGICVDWRGQTNGQCEATCARDQVYKPCGEAKRNTCFSREVIVDTLLSRNNTPVFVEGCYCPDGNILLNEHDGICVSVCGCTAQDGSVKKPREAWEHDCQYCTCDEETLNISCFPRPCAKSPPINCTKEGFVRKIKPRLDDPCCTETVCECDIKTCIINKTACDLGFQPVVAISEDGCCPIFSCIPKGVCVSEGVEFKPGAVVPKSSCEDCVCTDEQDAVTGTNRIQCVPVKCQTTCQQGFRYVEKEGQCCSQCQQVACVANFPFGSVTIEVGKSYKAPYDNCTQYTCTESGGQFSLTSTVKVCLPFEESNCVPGTVDVTSDGCCKTCIDLPHKCKRSMKEQYIVHKHCKSAAPVPVPFCEGTCSTYSVYSFENNEMEHKCICCHEKKSHVEKVELVCSEHKTLKFSYVHVDECGCVETKCPMRRT</sequence>
<keyword id="KW-1015">Disulfide bond</keyword>
<keyword id="KW-0325">Glycoprotein</keyword>
<keyword id="KW-1185">Reference proteome</keyword>
<keyword id="KW-0677">Repeat</keyword>
<keyword id="KW-0964">Secreted</keyword>
<keyword id="KW-0732">Signal</keyword>
<evidence type="ECO:0000250" key="1"/>
<evidence type="ECO:0000250" key="2">
    <source>
        <dbReference type="UniProtKB" id="Q02817"/>
    </source>
</evidence>
<evidence type="ECO:0000250" key="3">
    <source>
        <dbReference type="UniProtKB" id="Q9HC84"/>
    </source>
</evidence>
<evidence type="ECO:0000255" key="4"/>
<evidence type="ECO:0000255" key="5">
    <source>
        <dbReference type="PROSITE-ProRule" id="PRU00039"/>
    </source>
</evidence>
<evidence type="ECO:0000255" key="6">
    <source>
        <dbReference type="PROSITE-ProRule" id="PRU00220"/>
    </source>
</evidence>
<evidence type="ECO:0000255" key="7">
    <source>
        <dbReference type="PROSITE-ProRule" id="PRU00580"/>
    </source>
</evidence>
<evidence type="ECO:0000256" key="8">
    <source>
        <dbReference type="SAM" id="MobiDB-lite"/>
    </source>
</evidence>
<evidence type="ECO:0000269" key="9">
    <source>
    </source>
</evidence>
<evidence type="ECO:0000269" key="10">
    <source>
    </source>
</evidence>
<name>MUC5B_CHICK</name>
<dbReference type="EMBL" id="AB046524">
    <property type="protein sequence ID" value="BAB21488.1"/>
    <property type="molecule type" value="mRNA"/>
</dbReference>
<dbReference type="RefSeq" id="NP_989992.1">
    <property type="nucleotide sequence ID" value="NM_204661.1"/>
</dbReference>
<dbReference type="SMR" id="Q98UI9"/>
<dbReference type="FunCoup" id="Q98UI9">
    <property type="interactions" value="1"/>
</dbReference>
<dbReference type="STRING" id="9031.ENSGALP00000010852"/>
<dbReference type="Allergome" id="2741">
    <property type="allergen name" value="Gal d Ovomucin"/>
</dbReference>
<dbReference type="GlyCosmos" id="Q98UI9">
    <property type="glycosylation" value="16 sites, No reported glycans"/>
</dbReference>
<dbReference type="GlyGen" id="Q98UI9">
    <property type="glycosylation" value="17 sites"/>
</dbReference>
<dbReference type="iPTMnet" id="Q98UI9"/>
<dbReference type="PaxDb" id="9031-ENSGALP00000010852"/>
<dbReference type="GeneID" id="395381"/>
<dbReference type="KEGG" id="gga:395381"/>
<dbReference type="CTD" id="395381"/>
<dbReference type="VEuPathDB" id="HostDB:geneid_395381"/>
<dbReference type="eggNOG" id="KOG1216">
    <property type="taxonomic scope" value="Eukaryota"/>
</dbReference>
<dbReference type="InParanoid" id="Q98UI9"/>
<dbReference type="OrthoDB" id="6262482at2759"/>
<dbReference type="PhylomeDB" id="Q98UI9"/>
<dbReference type="PRO" id="PR:Q98UI9"/>
<dbReference type="Proteomes" id="UP000000539">
    <property type="component" value="Unassembled WGS sequence"/>
</dbReference>
<dbReference type="GO" id="GO:0031012">
    <property type="term" value="C:extracellular matrix"/>
    <property type="evidence" value="ECO:0000318"/>
    <property type="project" value="GO_Central"/>
</dbReference>
<dbReference type="GO" id="GO:0005615">
    <property type="term" value="C:extracellular space"/>
    <property type="evidence" value="ECO:0000314"/>
    <property type="project" value="AgBase"/>
</dbReference>
<dbReference type="GO" id="GO:0043231">
    <property type="term" value="C:intracellular membrane-bounded organelle"/>
    <property type="evidence" value="ECO:0000314"/>
    <property type="project" value="AgBase"/>
</dbReference>
<dbReference type="GO" id="GO:0046790">
    <property type="term" value="F:virion binding"/>
    <property type="evidence" value="ECO:0000314"/>
    <property type="project" value="AgBase"/>
</dbReference>
<dbReference type="GO" id="GO:0042632">
    <property type="term" value="P:cholesterol homeostasis"/>
    <property type="evidence" value="ECO:0000315"/>
    <property type="project" value="AgBase"/>
</dbReference>
<dbReference type="GO" id="GO:0030299">
    <property type="term" value="P:intestinal cholesterol absorption"/>
    <property type="evidence" value="ECO:0000315"/>
    <property type="project" value="AgBase"/>
</dbReference>
<dbReference type="GO" id="GO:0002281">
    <property type="term" value="P:macrophage activation involved in immune response"/>
    <property type="evidence" value="ECO:0000315"/>
    <property type="project" value="AgBase"/>
</dbReference>
<dbReference type="CDD" id="cd19941">
    <property type="entry name" value="TIL"/>
    <property type="match status" value="3"/>
</dbReference>
<dbReference type="FunFam" id="2.10.25.10:FF:000153">
    <property type="entry name" value="MUC5B isoform 1"/>
    <property type="match status" value="2"/>
</dbReference>
<dbReference type="FunFam" id="2.10.25.10:FF:000674">
    <property type="entry name" value="Mucin-2"/>
    <property type="match status" value="1"/>
</dbReference>
<dbReference type="FunFam" id="2.10.25.10:FF:000414">
    <property type="entry name" value="von Willebrand factor"/>
    <property type="match status" value="1"/>
</dbReference>
<dbReference type="Gene3D" id="2.10.25.10">
    <property type="entry name" value="Laminin"/>
    <property type="match status" value="4"/>
</dbReference>
<dbReference type="InterPro" id="IPR006207">
    <property type="entry name" value="Cys_knot_C"/>
</dbReference>
<dbReference type="InterPro" id="IPR050780">
    <property type="entry name" value="Mucin_vWF_Thrombospondin_sf"/>
</dbReference>
<dbReference type="InterPro" id="IPR036084">
    <property type="entry name" value="Ser_inhib-like_sf"/>
</dbReference>
<dbReference type="InterPro" id="IPR002919">
    <property type="entry name" value="TIL_dom"/>
</dbReference>
<dbReference type="InterPro" id="IPR014853">
    <property type="entry name" value="VWF/SSPO/ZAN-like_Cys-rich_dom"/>
</dbReference>
<dbReference type="InterPro" id="IPR001007">
    <property type="entry name" value="VWF_dom"/>
</dbReference>
<dbReference type="InterPro" id="IPR001846">
    <property type="entry name" value="VWF_type-D"/>
</dbReference>
<dbReference type="PANTHER" id="PTHR11339">
    <property type="entry name" value="EXTRACELLULAR MATRIX GLYCOPROTEIN RELATED"/>
    <property type="match status" value="1"/>
</dbReference>
<dbReference type="PANTHER" id="PTHR11339:SF403">
    <property type="entry name" value="MUCIN-5B-RELATED"/>
    <property type="match status" value="1"/>
</dbReference>
<dbReference type="Pfam" id="PF08742">
    <property type="entry name" value="C8"/>
    <property type="match status" value="4"/>
</dbReference>
<dbReference type="Pfam" id="PF01826">
    <property type="entry name" value="TIL"/>
    <property type="match status" value="3"/>
</dbReference>
<dbReference type="Pfam" id="PF00094">
    <property type="entry name" value="VWD"/>
    <property type="match status" value="4"/>
</dbReference>
<dbReference type="Pfam" id="PF23244">
    <property type="entry name" value="VWF"/>
    <property type="match status" value="1"/>
</dbReference>
<dbReference type="SMART" id="SM00832">
    <property type="entry name" value="C8"/>
    <property type="match status" value="4"/>
</dbReference>
<dbReference type="SMART" id="SM00041">
    <property type="entry name" value="CT"/>
    <property type="match status" value="1"/>
</dbReference>
<dbReference type="SMART" id="SM00214">
    <property type="entry name" value="VWC"/>
    <property type="match status" value="6"/>
</dbReference>
<dbReference type="SMART" id="SM00215">
    <property type="entry name" value="VWC_out"/>
    <property type="match status" value="2"/>
</dbReference>
<dbReference type="SMART" id="SM00216">
    <property type="entry name" value="VWD"/>
    <property type="match status" value="4"/>
</dbReference>
<dbReference type="SUPFAM" id="SSF57603">
    <property type="entry name" value="FnI-like domain"/>
    <property type="match status" value="1"/>
</dbReference>
<dbReference type="SUPFAM" id="SSF57567">
    <property type="entry name" value="Serine protease inhibitors"/>
    <property type="match status" value="5"/>
</dbReference>
<dbReference type="PROSITE" id="PS01225">
    <property type="entry name" value="CTCK_2"/>
    <property type="match status" value="1"/>
</dbReference>
<dbReference type="PROSITE" id="PS01208">
    <property type="entry name" value="VWFC_1"/>
    <property type="match status" value="2"/>
</dbReference>
<dbReference type="PROSITE" id="PS50184">
    <property type="entry name" value="VWFC_2"/>
    <property type="match status" value="2"/>
</dbReference>
<dbReference type="PROSITE" id="PS51233">
    <property type="entry name" value="VWFD"/>
    <property type="match status" value="4"/>
</dbReference>
<proteinExistence type="evidence at protein level"/>
<protein>
    <recommendedName>
        <fullName>Mucin-5B</fullName>
    </recommendedName>
    <alternativeName>
        <fullName>Ovomucin, alpha-subunit</fullName>
    </alternativeName>
</protein>
<comment type="function">
    <text evidence="10">Ovomucin, the glycoprotein responsible for the gel properties of egg white, is composed for 2 subunits, alpha-ovomucin/MUC5B and beta-ovomucin/MUC6.</text>
</comment>
<comment type="subunit">
    <text evidence="2 3 10">Homomultimer; disulfide-linked (PubMed:5119791). The N- and C-terminus mediate their assembly into higher order structures to form filaments (By similarity). The CTCK domains of two polypeptides associate in the endoplasmic reticulum to generate intermolecularly disulfide-bonded dimers (By similarity). These dimers progress to the Golgi apparatus, which is a more acidic environment than the endoplasmic reticulum. Under acidic conditions, the N-termini form non-covalent intermolecular interactions that juxtapose assemblies from different CTCK-linked dimers to produce long, disulfide-linked polymers that remain highly compact until secretion (By similarity).</text>
</comment>
<comment type="subcellular location">
    <subcellularLocation>
        <location>Secreted</location>
    </subcellularLocation>
</comment>
<comment type="domain">
    <text evidence="3">The CTCK domain mediates interchain disulfide bonds with another molecule of MUC5B.</text>
</comment>
<comment type="PTM">
    <text evidence="9">N-glycosylated. Complex glycosylation with bisecting N-acetylglucosamine. Contains mainly N-acetylglucosamine (3.1-8.5%), mannose (2.9-4.6%), a small amount of galactose (1.1-4.35) and sialic acid (0.3-1.3%). Most abundant glycan is composed of a GlcNAc(2)Man(3) core, a bisecting GlcNAc and another 3 GlcNAc antannae located on the mannoses of the core. Site Asn-1639 exists both in glycosylated and non-glycosylated forms.</text>
</comment>
<feature type="signal peptide" evidence="4">
    <location>
        <begin position="1"/>
        <end position="21"/>
    </location>
</feature>
<feature type="chain" id="PRO_5000049585" description="Mucin-5B">
    <location>
        <begin position="22"/>
        <end position="2108"/>
    </location>
</feature>
<feature type="domain" description="VWFD 1" evidence="7">
    <location>
        <begin position="36"/>
        <end position="203"/>
    </location>
</feature>
<feature type="domain" description="TIL 1">
    <location>
        <begin position="304"/>
        <end position="360"/>
    </location>
</feature>
<feature type="domain" description="VWFD 2" evidence="7">
    <location>
        <begin position="398"/>
        <end position="570"/>
    </location>
</feature>
<feature type="domain" description="TIL 2">
    <location>
        <begin position="666"/>
        <end position="723"/>
    </location>
</feature>
<feature type="domain" description="TIL 3">
    <location>
        <begin position="782"/>
        <end position="825"/>
    </location>
</feature>
<feature type="domain" description="VWFC 1" evidence="6">
    <location>
        <begin position="825"/>
        <end position="897"/>
    </location>
</feature>
<feature type="domain" description="VWFD 3" evidence="7">
    <location>
        <begin position="863"/>
        <end position="1033"/>
    </location>
</feature>
<feature type="domain" description="VWFD 4" evidence="7">
    <location>
        <begin position="1429"/>
        <end position="1613"/>
    </location>
</feature>
<feature type="domain" description="VWFC 2" evidence="6">
    <location>
        <begin position="1761"/>
        <end position="1832"/>
    </location>
</feature>
<feature type="domain" description="VWFC 3" evidence="6">
    <location>
        <begin position="1870"/>
        <end position="1937"/>
    </location>
</feature>
<feature type="domain" description="CTCK" evidence="5">
    <location>
        <begin position="2010"/>
        <end position="2104"/>
    </location>
</feature>
<feature type="region of interest" description="Disordered" evidence="8">
    <location>
        <begin position="196"/>
        <end position="219"/>
    </location>
</feature>
<feature type="site" description="Not glycosylated" evidence="9">
    <location>
        <position position="69"/>
    </location>
</feature>
<feature type="site" description="Not glycosylated" evidence="9">
    <location>
        <position position="673"/>
    </location>
</feature>
<feature type="glycosylation site" description="N-linked (GlcNAc...) (complex) asparagine" evidence="9">
    <location>
        <position position="381"/>
    </location>
</feature>
<feature type="glycosylation site" description="N-linked (GlcNAc...) (complex) asparagine" evidence="9">
    <location>
        <position position="528"/>
    </location>
</feature>
<feature type="glycosylation site" description="N-linked (GlcNAc...) (complex) asparagine" evidence="9">
    <location>
        <position position="599"/>
    </location>
</feature>
<feature type="glycosylation site" description="N-linked (GlcNAc...) (complex) asparagine" evidence="9">
    <location>
        <position position="680"/>
    </location>
</feature>
<feature type="glycosylation site" description="N-linked (GlcNAc...) (complex) asparagine" evidence="9">
    <location>
        <position position="772"/>
    </location>
</feature>
<feature type="glycosylation site" description="N-linked (GlcNAc...) (complex) asparagine" evidence="9">
    <location>
        <position position="855"/>
    </location>
</feature>
<feature type="glycosylation site" description="N-linked (GlcNAc...) (complex) asparagine" evidence="9">
    <location>
        <position position="1036"/>
    </location>
</feature>
<feature type="glycosylation site" description="N-linked (GlcNAc...) (complex) asparagine" evidence="9">
    <location>
        <position position="1219"/>
    </location>
</feature>
<feature type="glycosylation site" description="N-linked (GlcNAc...) (complex) asparagine" evidence="9">
    <location>
        <position position="1371"/>
    </location>
</feature>
<feature type="glycosylation site" description="N-linked (GlcNAc...) (complex) asparagine" evidence="9">
    <location>
        <position position="1452"/>
    </location>
</feature>
<feature type="glycosylation site" description="N-linked (GlcNAc...) (complex) asparagine" evidence="9">
    <location>
        <position position="1567"/>
    </location>
</feature>
<feature type="glycosylation site" description="N-linked (GlcNAc...) (complex) asparagine" evidence="9">
    <location>
        <position position="1639"/>
    </location>
</feature>
<feature type="glycosylation site" description="N-linked (GlcNAc...) (complex) asparagine" evidence="9">
    <location>
        <position position="1792"/>
    </location>
</feature>
<feature type="glycosylation site" description="N-linked (GlcNAc...) (complex) asparagine" evidence="9">
    <location>
        <position position="1807"/>
    </location>
</feature>
<feature type="glycosylation site" description="N-linked (GlcNAc...) (complex) asparagine" evidence="9">
    <location>
        <position position="1841"/>
    </location>
</feature>
<feature type="glycosylation site" description="N-linked (GlcNAc...) (complex) asparagine" evidence="9">
    <location>
        <position position="1964"/>
    </location>
</feature>
<feature type="disulfide bond" evidence="7">
    <location>
        <begin position="38"/>
        <end position="166"/>
    </location>
</feature>
<feature type="disulfide bond" evidence="7">
    <location>
        <begin position="60"/>
        <end position="202"/>
    </location>
</feature>
<feature type="disulfide bond" evidence="7">
    <location>
        <begin position="400"/>
        <end position="534"/>
    </location>
</feature>
<feature type="disulfide bond" evidence="7">
    <location>
        <begin position="422"/>
        <end position="569"/>
    </location>
</feature>
<feature type="disulfide bond" evidence="7">
    <location>
        <begin position="443"/>
        <end position="451"/>
    </location>
</feature>
<feature type="disulfide bond" evidence="7">
    <location>
        <begin position="865"/>
        <end position="997"/>
    </location>
</feature>
<feature type="disulfide bond" evidence="7">
    <location>
        <begin position="887"/>
        <end position="1032"/>
    </location>
</feature>
<feature type="disulfide bond" evidence="7">
    <location>
        <begin position="896"/>
        <end position="994"/>
    </location>
</feature>
<feature type="disulfide bond" evidence="7">
    <location>
        <begin position="914"/>
        <end position="921"/>
    </location>
</feature>
<feature type="disulfide bond" evidence="7">
    <location>
        <begin position="1431"/>
        <end position="1573"/>
    </location>
</feature>
<feature type="disulfide bond" evidence="7">
    <location>
        <begin position="1453"/>
        <end position="1612"/>
    </location>
</feature>
<feature type="disulfide bond" evidence="7">
    <location>
        <begin position="1477"/>
        <end position="1485"/>
    </location>
</feature>
<feature type="disulfide bond" evidence="1">
    <location>
        <begin position="2010"/>
        <end position="2066"/>
    </location>
</feature>
<feature type="disulfide bond" evidence="1">
    <location>
        <begin position="2031"/>
        <end position="2080"/>
    </location>
</feature>
<feature type="disulfide bond" evidence="1">
    <location>
        <begin position="2042"/>
        <end position="2096"/>
    </location>
</feature>
<feature type="disulfide bond" evidence="1">
    <location>
        <begin position="2046"/>
        <end position="2098"/>
    </location>
</feature>
<reference key="1">
    <citation type="journal article" date="2004" name="DNA Seq.">
        <title>Amino acid sequence of alpha-subunit in hen egg white ovomucin deduced from cloned cDNA.</title>
        <authorList>
            <person name="Watanabe K."/>
            <person name="Shimoyamada M."/>
            <person name="Onizuka T."/>
            <person name="Akiyama H."/>
            <person name="Niwa M."/>
            <person name="Ido T."/>
            <person name="Tsuge Y."/>
        </authorList>
    </citation>
    <scope>NUCLEOTIDE SEQUENCE [MRNA]</scope>
    <source>
        <tissue>Oviduct</tissue>
    </source>
</reference>
<reference key="2">
    <citation type="journal article" date="1971" name="Biochem. J.">
        <title>Studies on the composition of egg-white ovomucin.</title>
        <authorList>
            <person name="Robinson D.S."/>
            <person name="Monsey J.B."/>
        </authorList>
    </citation>
    <scope>STRUCTURE OF CARBOHYDRATES</scope>
    <scope>FUNCTION</scope>
    <scope>SUBUNIT</scope>
</reference>
<reference key="3">
    <citation type="journal article" date="2011" name="Glycoconj. J.">
        <title>N-glycosylation of ovomucin from hen egg white.</title>
        <authorList>
            <person name="Offengenden M."/>
            <person name="Fentabil M.A."/>
            <person name="Wu J."/>
        </authorList>
    </citation>
    <scope>GLYCOSYLATION AT ASN-381; ASN-528; ASN-599; ASN-680; ASN-772; ASN-855; ASN-1036; ASN-1219; ASN-1371; ASN-1452; ASN-1567; ASN-1639; ASN-1792; ASN-1807; ASN-1841 AND ASN-1964</scope>
    <scope>LACK OF GLYCOSYLATION AT ASN-69 AND ASN-673</scope>
    <scope>IDENTIFICATION BY MASS SPECTROMETRY</scope>
    <scope>STRUCTURE OF CARBOHYDRATES</scope>
</reference>
<accession>Q98UI9</accession>